<name>RS16_BURMA</name>
<feature type="chain" id="PRO_0000243785" description="Small ribosomal subunit protein bS16">
    <location>
        <begin position="1"/>
        <end position="84"/>
    </location>
</feature>
<protein>
    <recommendedName>
        <fullName evidence="1">Small ribosomal subunit protein bS16</fullName>
    </recommendedName>
    <alternativeName>
        <fullName evidence="2">30S ribosomal protein S16</fullName>
    </alternativeName>
</protein>
<keyword id="KW-1185">Reference proteome</keyword>
<keyword id="KW-0687">Ribonucleoprotein</keyword>
<keyword id="KW-0689">Ribosomal protein</keyword>
<accession>Q62M50</accession>
<reference key="1">
    <citation type="journal article" date="2004" name="Proc. Natl. Acad. Sci. U.S.A.">
        <title>Structural flexibility in the Burkholderia mallei genome.</title>
        <authorList>
            <person name="Nierman W.C."/>
            <person name="DeShazer D."/>
            <person name="Kim H.S."/>
            <person name="Tettelin H."/>
            <person name="Nelson K.E."/>
            <person name="Feldblyum T.V."/>
            <person name="Ulrich R.L."/>
            <person name="Ronning C.M."/>
            <person name="Brinkac L.M."/>
            <person name="Daugherty S.C."/>
            <person name="Davidsen T.D."/>
            <person name="DeBoy R.T."/>
            <person name="Dimitrov G."/>
            <person name="Dodson R.J."/>
            <person name="Durkin A.S."/>
            <person name="Gwinn M.L."/>
            <person name="Haft D.H."/>
            <person name="Khouri H.M."/>
            <person name="Kolonay J.F."/>
            <person name="Madupu R."/>
            <person name="Mohammoud Y."/>
            <person name="Nelson W.C."/>
            <person name="Radune D."/>
            <person name="Romero C.M."/>
            <person name="Sarria S."/>
            <person name="Selengut J."/>
            <person name="Shamblin C."/>
            <person name="Sullivan S.A."/>
            <person name="White O."/>
            <person name="Yu Y."/>
            <person name="Zafar N."/>
            <person name="Zhou L."/>
            <person name="Fraser C.M."/>
        </authorList>
    </citation>
    <scope>NUCLEOTIDE SEQUENCE [LARGE SCALE GENOMIC DNA]</scope>
    <source>
        <strain>ATCC 23344</strain>
    </source>
</reference>
<comment type="similarity">
    <text evidence="1">Belongs to the bacterial ribosomal protein bS16 family.</text>
</comment>
<dbReference type="EMBL" id="CP000010">
    <property type="protein sequence ID" value="AAU48780.1"/>
    <property type="molecule type" value="Genomic_DNA"/>
</dbReference>
<dbReference type="RefSeq" id="WP_004189402.1">
    <property type="nucleotide sequence ID" value="NC_006348.1"/>
</dbReference>
<dbReference type="RefSeq" id="YP_102218.1">
    <property type="nucleotide sequence ID" value="NC_006348.1"/>
</dbReference>
<dbReference type="SMR" id="Q62M50"/>
<dbReference type="GeneID" id="93061079"/>
<dbReference type="KEGG" id="bma:BMA0403"/>
<dbReference type="PATRIC" id="fig|243160.12.peg.408"/>
<dbReference type="eggNOG" id="COG0228">
    <property type="taxonomic scope" value="Bacteria"/>
</dbReference>
<dbReference type="HOGENOM" id="CLU_100590_5_1_4"/>
<dbReference type="Proteomes" id="UP000006693">
    <property type="component" value="Chromosome 1"/>
</dbReference>
<dbReference type="GO" id="GO:0005737">
    <property type="term" value="C:cytoplasm"/>
    <property type="evidence" value="ECO:0007669"/>
    <property type="project" value="UniProtKB-ARBA"/>
</dbReference>
<dbReference type="GO" id="GO:0015935">
    <property type="term" value="C:small ribosomal subunit"/>
    <property type="evidence" value="ECO:0007669"/>
    <property type="project" value="TreeGrafter"/>
</dbReference>
<dbReference type="GO" id="GO:0003735">
    <property type="term" value="F:structural constituent of ribosome"/>
    <property type="evidence" value="ECO:0007669"/>
    <property type="project" value="InterPro"/>
</dbReference>
<dbReference type="GO" id="GO:0006412">
    <property type="term" value="P:translation"/>
    <property type="evidence" value="ECO:0007669"/>
    <property type="project" value="UniProtKB-UniRule"/>
</dbReference>
<dbReference type="Gene3D" id="3.30.1320.10">
    <property type="match status" value="1"/>
</dbReference>
<dbReference type="HAMAP" id="MF_00385">
    <property type="entry name" value="Ribosomal_bS16"/>
    <property type="match status" value="1"/>
</dbReference>
<dbReference type="InterPro" id="IPR000307">
    <property type="entry name" value="Ribosomal_bS16"/>
</dbReference>
<dbReference type="InterPro" id="IPR023803">
    <property type="entry name" value="Ribosomal_bS16_dom_sf"/>
</dbReference>
<dbReference type="NCBIfam" id="TIGR00002">
    <property type="entry name" value="S16"/>
    <property type="match status" value="1"/>
</dbReference>
<dbReference type="PANTHER" id="PTHR12919">
    <property type="entry name" value="30S RIBOSOMAL PROTEIN S16"/>
    <property type="match status" value="1"/>
</dbReference>
<dbReference type="PANTHER" id="PTHR12919:SF20">
    <property type="entry name" value="SMALL RIBOSOMAL SUBUNIT PROTEIN BS16M"/>
    <property type="match status" value="1"/>
</dbReference>
<dbReference type="Pfam" id="PF00886">
    <property type="entry name" value="Ribosomal_S16"/>
    <property type="match status" value="1"/>
</dbReference>
<dbReference type="SUPFAM" id="SSF54565">
    <property type="entry name" value="Ribosomal protein S16"/>
    <property type="match status" value="1"/>
</dbReference>
<evidence type="ECO:0000255" key="1">
    <source>
        <dbReference type="HAMAP-Rule" id="MF_00385"/>
    </source>
</evidence>
<evidence type="ECO:0000305" key="2"/>
<organism>
    <name type="scientific">Burkholderia mallei (strain ATCC 23344)</name>
    <dbReference type="NCBI Taxonomy" id="243160"/>
    <lineage>
        <taxon>Bacteria</taxon>
        <taxon>Pseudomonadati</taxon>
        <taxon>Pseudomonadota</taxon>
        <taxon>Betaproteobacteria</taxon>
        <taxon>Burkholderiales</taxon>
        <taxon>Burkholderiaceae</taxon>
        <taxon>Burkholderia</taxon>
        <taxon>pseudomallei group</taxon>
    </lineage>
</organism>
<sequence>MVIIRLARGGSKKRPFYNIVATDSRNRRDGRFIERVGFYNPVATKGEALRIAQDRLTYWQGVGAQLSPTVERLVKQAQKAQPAA</sequence>
<proteinExistence type="inferred from homology"/>
<gene>
    <name evidence="1" type="primary">rpsP</name>
    <name type="ordered locus">BMA0403</name>
</gene>